<name>BH047_ARATH</name>
<feature type="chain" id="PRO_0000358745" description="Transcription factor bHLH47">
    <location>
        <begin position="1"/>
        <end position="240"/>
    </location>
</feature>
<feature type="domain" description="bHLH" evidence="2">
    <location>
        <begin position="27"/>
        <end position="77"/>
    </location>
</feature>
<feature type="region of interest" description="Disordered" evidence="3">
    <location>
        <begin position="1"/>
        <end position="26"/>
    </location>
</feature>
<feature type="region of interest" description="Disordered" evidence="3">
    <location>
        <begin position="128"/>
        <end position="153"/>
    </location>
</feature>
<feature type="coiled-coil region" evidence="1">
    <location>
        <begin position="98"/>
        <end position="131"/>
    </location>
</feature>
<feature type="compositionally biased region" description="Polar residues" evidence="3">
    <location>
        <begin position="1"/>
        <end position="13"/>
    </location>
</feature>
<feature type="compositionally biased region" description="Polar residues" evidence="3">
    <location>
        <begin position="128"/>
        <end position="138"/>
    </location>
</feature>
<organism>
    <name type="scientific">Arabidopsis thaliana</name>
    <name type="common">Mouse-ear cress</name>
    <dbReference type="NCBI Taxonomy" id="3702"/>
    <lineage>
        <taxon>Eukaryota</taxon>
        <taxon>Viridiplantae</taxon>
        <taxon>Streptophyta</taxon>
        <taxon>Embryophyta</taxon>
        <taxon>Tracheophyta</taxon>
        <taxon>Spermatophyta</taxon>
        <taxon>Magnoliopsida</taxon>
        <taxon>eudicotyledons</taxon>
        <taxon>Gunneridae</taxon>
        <taxon>Pentapetalae</taxon>
        <taxon>rosids</taxon>
        <taxon>malvids</taxon>
        <taxon>Brassicales</taxon>
        <taxon>Brassicaceae</taxon>
        <taxon>Camelineae</taxon>
        <taxon>Arabidopsis</taxon>
    </lineage>
</organism>
<keyword id="KW-0175">Coiled coil</keyword>
<keyword id="KW-0238">DNA-binding</keyword>
<keyword id="KW-0539">Nucleus</keyword>
<keyword id="KW-1185">Reference proteome</keyword>
<keyword id="KW-0804">Transcription</keyword>
<keyword id="KW-0805">Transcription regulation</keyword>
<evidence type="ECO:0000255" key="1"/>
<evidence type="ECO:0000255" key="2">
    <source>
        <dbReference type="PROSITE-ProRule" id="PRU00981"/>
    </source>
</evidence>
<evidence type="ECO:0000256" key="3">
    <source>
        <dbReference type="SAM" id="MobiDB-lite"/>
    </source>
</evidence>
<evidence type="ECO:0000269" key="4">
    <source>
    </source>
</evidence>
<evidence type="ECO:0000269" key="5">
    <source>
    </source>
</evidence>
<evidence type="ECO:0000305" key="6"/>
<proteinExistence type="evidence at protein level"/>
<sequence>MVSKTPSTSSDEANATADERCRKGKVPKRINKAVRERLKREHLNELFIELADTLELNQQNSGKASILCEATRFLKDVFGQIESLRKEHASLLSESSYVTTEKNELKEETSVLETEISKLQNEIEARANQSKPDLNTSPAPEYHHHHYQQQHPERVSQFPGLPIFQGPGFQQSATTLHPPATVLVLPIQPDPQTQDISEMTQAQQPLMFNSSNVSKPCPRYASAADSWSSRLLGERLKASE</sequence>
<reference key="1">
    <citation type="journal article" date="2000" name="Nature">
        <title>Sequence and analysis of chromosome 3 of the plant Arabidopsis thaliana.</title>
        <authorList>
            <person name="Salanoubat M."/>
            <person name="Lemcke K."/>
            <person name="Rieger M."/>
            <person name="Ansorge W."/>
            <person name="Unseld M."/>
            <person name="Fartmann B."/>
            <person name="Valle G."/>
            <person name="Bloecker H."/>
            <person name="Perez-Alonso M."/>
            <person name="Obermaier B."/>
            <person name="Delseny M."/>
            <person name="Boutry M."/>
            <person name="Grivell L.A."/>
            <person name="Mache R."/>
            <person name="Puigdomenech P."/>
            <person name="De Simone V."/>
            <person name="Choisne N."/>
            <person name="Artiguenave F."/>
            <person name="Robert C."/>
            <person name="Brottier P."/>
            <person name="Wincker P."/>
            <person name="Cattolico L."/>
            <person name="Weissenbach J."/>
            <person name="Saurin W."/>
            <person name="Quetier F."/>
            <person name="Schaefer M."/>
            <person name="Mueller-Auer S."/>
            <person name="Gabel C."/>
            <person name="Fuchs M."/>
            <person name="Benes V."/>
            <person name="Wurmbach E."/>
            <person name="Drzonek H."/>
            <person name="Erfle H."/>
            <person name="Jordan N."/>
            <person name="Bangert S."/>
            <person name="Wiedelmann R."/>
            <person name="Kranz H."/>
            <person name="Voss H."/>
            <person name="Holland R."/>
            <person name="Brandt P."/>
            <person name="Nyakatura G."/>
            <person name="Vezzi A."/>
            <person name="D'Angelo M."/>
            <person name="Pallavicini A."/>
            <person name="Toppo S."/>
            <person name="Simionati B."/>
            <person name="Conrad A."/>
            <person name="Hornischer K."/>
            <person name="Kauer G."/>
            <person name="Loehnert T.-H."/>
            <person name="Nordsiek G."/>
            <person name="Reichelt J."/>
            <person name="Scharfe M."/>
            <person name="Schoen O."/>
            <person name="Bargues M."/>
            <person name="Terol J."/>
            <person name="Climent J."/>
            <person name="Navarro P."/>
            <person name="Collado C."/>
            <person name="Perez-Perez A."/>
            <person name="Ottenwaelder B."/>
            <person name="Duchemin D."/>
            <person name="Cooke R."/>
            <person name="Laudie M."/>
            <person name="Berger-Llauro C."/>
            <person name="Purnelle B."/>
            <person name="Masuy D."/>
            <person name="de Haan M."/>
            <person name="Maarse A.C."/>
            <person name="Alcaraz J.-P."/>
            <person name="Cottet A."/>
            <person name="Casacuberta E."/>
            <person name="Monfort A."/>
            <person name="Argiriou A."/>
            <person name="Flores M."/>
            <person name="Liguori R."/>
            <person name="Vitale D."/>
            <person name="Mannhaupt G."/>
            <person name="Haase D."/>
            <person name="Schoof H."/>
            <person name="Rudd S."/>
            <person name="Zaccaria P."/>
            <person name="Mewes H.-W."/>
            <person name="Mayer K.F.X."/>
            <person name="Kaul S."/>
            <person name="Town C.D."/>
            <person name="Koo H.L."/>
            <person name="Tallon L.J."/>
            <person name="Jenkins J."/>
            <person name="Rooney T."/>
            <person name="Rizzo M."/>
            <person name="Walts A."/>
            <person name="Utterback T."/>
            <person name="Fujii C.Y."/>
            <person name="Shea T.P."/>
            <person name="Creasy T.H."/>
            <person name="Haas B."/>
            <person name="Maiti R."/>
            <person name="Wu D."/>
            <person name="Peterson J."/>
            <person name="Van Aken S."/>
            <person name="Pai G."/>
            <person name="Militscher J."/>
            <person name="Sellers P."/>
            <person name="Gill J.E."/>
            <person name="Feldblyum T.V."/>
            <person name="Preuss D."/>
            <person name="Lin X."/>
            <person name="Nierman W.C."/>
            <person name="Salzberg S.L."/>
            <person name="White O."/>
            <person name="Venter J.C."/>
            <person name="Fraser C.M."/>
            <person name="Kaneko T."/>
            <person name="Nakamura Y."/>
            <person name="Sato S."/>
            <person name="Kato T."/>
            <person name="Asamizu E."/>
            <person name="Sasamoto S."/>
            <person name="Kimura T."/>
            <person name="Idesawa K."/>
            <person name="Kawashima K."/>
            <person name="Kishida Y."/>
            <person name="Kiyokawa C."/>
            <person name="Kohara M."/>
            <person name="Matsumoto M."/>
            <person name="Matsuno A."/>
            <person name="Muraki A."/>
            <person name="Nakayama S."/>
            <person name="Nakazaki N."/>
            <person name="Shinpo S."/>
            <person name="Takeuchi C."/>
            <person name="Wada T."/>
            <person name="Watanabe A."/>
            <person name="Yamada M."/>
            <person name="Yasuda M."/>
            <person name="Tabata S."/>
        </authorList>
    </citation>
    <scope>NUCLEOTIDE SEQUENCE [LARGE SCALE GENOMIC DNA]</scope>
    <source>
        <strain>cv. Columbia</strain>
    </source>
</reference>
<reference key="2">
    <citation type="journal article" date="2017" name="Plant J.">
        <title>Araport11: a complete reannotation of the Arabidopsis thaliana reference genome.</title>
        <authorList>
            <person name="Cheng C.Y."/>
            <person name="Krishnakumar V."/>
            <person name="Chan A.P."/>
            <person name="Thibaud-Nissen F."/>
            <person name="Schobel S."/>
            <person name="Town C.D."/>
        </authorList>
    </citation>
    <scope>GENOME REANNOTATION</scope>
    <source>
        <strain>cv. Columbia</strain>
    </source>
</reference>
<reference key="3">
    <citation type="journal article" date="2003" name="Science">
        <title>Empirical analysis of transcriptional activity in the Arabidopsis genome.</title>
        <authorList>
            <person name="Yamada K."/>
            <person name="Lim J."/>
            <person name="Dale J.M."/>
            <person name="Chen H."/>
            <person name="Shinn P."/>
            <person name="Palm C.J."/>
            <person name="Southwick A.M."/>
            <person name="Wu H.C."/>
            <person name="Kim C.J."/>
            <person name="Nguyen M."/>
            <person name="Pham P.K."/>
            <person name="Cheuk R.F."/>
            <person name="Karlin-Newmann G."/>
            <person name="Liu S.X."/>
            <person name="Lam B."/>
            <person name="Sakano H."/>
            <person name="Wu T."/>
            <person name="Yu G."/>
            <person name="Miranda M."/>
            <person name="Quach H.L."/>
            <person name="Tripp M."/>
            <person name="Chang C.H."/>
            <person name="Lee J.M."/>
            <person name="Toriumi M.J."/>
            <person name="Chan M.M."/>
            <person name="Tang C.C."/>
            <person name="Onodera C.S."/>
            <person name="Deng J.M."/>
            <person name="Akiyama K."/>
            <person name="Ansari Y."/>
            <person name="Arakawa T."/>
            <person name="Banh J."/>
            <person name="Banno F."/>
            <person name="Bowser L."/>
            <person name="Brooks S.Y."/>
            <person name="Carninci P."/>
            <person name="Chao Q."/>
            <person name="Choy N."/>
            <person name="Enju A."/>
            <person name="Goldsmith A.D."/>
            <person name="Gurjal M."/>
            <person name="Hansen N.F."/>
            <person name="Hayashizaki Y."/>
            <person name="Johnson-Hopson C."/>
            <person name="Hsuan V.W."/>
            <person name="Iida K."/>
            <person name="Karnes M."/>
            <person name="Khan S."/>
            <person name="Koesema E."/>
            <person name="Ishida J."/>
            <person name="Jiang P.X."/>
            <person name="Jones T."/>
            <person name="Kawai J."/>
            <person name="Kamiya A."/>
            <person name="Meyers C."/>
            <person name="Nakajima M."/>
            <person name="Narusaka M."/>
            <person name="Seki M."/>
            <person name="Sakurai T."/>
            <person name="Satou M."/>
            <person name="Tamse R."/>
            <person name="Vaysberg M."/>
            <person name="Wallender E.K."/>
            <person name="Wong C."/>
            <person name="Yamamura Y."/>
            <person name="Yuan S."/>
            <person name="Shinozaki K."/>
            <person name="Davis R.W."/>
            <person name="Theologis A."/>
            <person name="Ecker J.R."/>
        </authorList>
    </citation>
    <scope>NUCLEOTIDE SEQUENCE [LARGE SCALE MRNA]</scope>
    <source>
        <strain>cv. Columbia</strain>
    </source>
</reference>
<reference key="4">
    <citation type="journal article" date="2003" name="Mol. Biol. Evol.">
        <title>The basic helix-loop-helix transcription factor family in plants: a genome-wide study of protein structure and functional diversity.</title>
        <authorList>
            <person name="Heim M.A."/>
            <person name="Jakoby M."/>
            <person name="Werber M."/>
            <person name="Martin C."/>
            <person name="Weisshaar B."/>
            <person name="Bailey P.C."/>
        </authorList>
    </citation>
    <scope>NUCLEOTIDE SEQUENCE [MRNA] OF 36-240</scope>
    <scope>TISSUE SPECIFICITY</scope>
    <scope>GENE FAMILY</scope>
    <scope>NOMENCLATURE</scope>
    <source>
        <strain>cv. Columbia</strain>
    </source>
</reference>
<reference key="5">
    <citation type="journal article" date="2003" name="Plant Cell">
        <title>The Arabidopsis basic/helix-loop-helix transcription factor family.</title>
        <authorList>
            <person name="Toledo-Ortiz G."/>
            <person name="Huq E."/>
            <person name="Quail P.H."/>
        </authorList>
    </citation>
    <scope>GENE FAMILY</scope>
</reference>
<reference key="6">
    <citation type="journal article" date="2003" name="Plant Cell">
        <title>Update on the basic helix-loop-helix transcription factor gene family in Arabidopsis thaliana.</title>
        <authorList>
            <person name="Bailey P.C."/>
            <person name="Martin C."/>
            <person name="Toledo-Ortiz G."/>
            <person name="Quail P.H."/>
            <person name="Huq E."/>
            <person name="Heim M.A."/>
            <person name="Jakoby M."/>
            <person name="Werber M."/>
            <person name="Weisshaar B."/>
        </authorList>
    </citation>
    <scope>GENE FAMILY</scope>
    <scope>NOMENCLATURE</scope>
</reference>
<reference key="7">
    <citation type="journal article" date="2015" name="Plant Physiol.">
        <title>Iron-binding E3 ligase mediates iron response in plants by targeting basic helix-loop-helix transcription factors.</title>
        <authorList>
            <person name="Selote D."/>
            <person name="Samira R."/>
            <person name="Matthiadis A."/>
            <person name="Gillikin J.W."/>
            <person name="Long T.A."/>
        </authorList>
    </citation>
    <scope>SUBCELLULAR LOCATION</scope>
    <scope>INTERACTION WITH BHLH115; BHLH104 AND ILR3</scope>
    <source>
        <strain>cv. Columbia</strain>
    </source>
</reference>
<accession>Q9SN74</accession>
<dbReference type="EMBL" id="AY080786">
    <property type="protein sequence ID" value="AAL87269.1"/>
    <property type="molecule type" value="mRNA"/>
</dbReference>
<dbReference type="EMBL" id="AY114018">
    <property type="protein sequence ID" value="AAM45066.1"/>
    <property type="molecule type" value="mRNA"/>
</dbReference>
<dbReference type="EMBL" id="AL132955">
    <property type="protein sequence ID" value="CAB61990.1"/>
    <property type="molecule type" value="Genomic_DNA"/>
</dbReference>
<dbReference type="EMBL" id="CP002686">
    <property type="protein sequence ID" value="AEE78311.1"/>
    <property type="molecule type" value="Genomic_DNA"/>
</dbReference>
<dbReference type="EMBL" id="CP002686">
    <property type="protein sequence ID" value="AEE78312.1"/>
    <property type="molecule type" value="Genomic_DNA"/>
</dbReference>
<dbReference type="EMBL" id="CP002686">
    <property type="protein sequence ID" value="AEE78313.1"/>
    <property type="molecule type" value="Genomic_DNA"/>
</dbReference>
<dbReference type="EMBL" id="AF488582">
    <property type="status" value="NOT_ANNOTATED_CDS"/>
    <property type="molecule type" value="mRNA"/>
</dbReference>
<dbReference type="PIR" id="T45724">
    <property type="entry name" value="T45724"/>
</dbReference>
<dbReference type="RefSeq" id="NP_001190029.1">
    <property type="nucleotide sequence ID" value="NM_001203100.1"/>
</dbReference>
<dbReference type="RefSeq" id="NP_001190030.1">
    <property type="nucleotide sequence ID" value="NM_001203101.1"/>
</dbReference>
<dbReference type="RefSeq" id="NP_190348.1">
    <property type="nucleotide sequence ID" value="NM_114632.4"/>
</dbReference>
<dbReference type="SMR" id="Q9SN74"/>
<dbReference type="BioGRID" id="9238">
    <property type="interactions" value="27"/>
</dbReference>
<dbReference type="FunCoup" id="Q9SN74">
    <property type="interactions" value="292"/>
</dbReference>
<dbReference type="IntAct" id="Q9SN74">
    <property type="interactions" value="23"/>
</dbReference>
<dbReference type="STRING" id="3702.Q9SN74"/>
<dbReference type="PaxDb" id="3702-AT3G47640.2"/>
<dbReference type="EnsemblPlants" id="AT3G47640.1">
    <property type="protein sequence ID" value="AT3G47640.1"/>
    <property type="gene ID" value="AT3G47640"/>
</dbReference>
<dbReference type="EnsemblPlants" id="AT3G47640.2">
    <property type="protein sequence ID" value="AT3G47640.2"/>
    <property type="gene ID" value="AT3G47640"/>
</dbReference>
<dbReference type="EnsemblPlants" id="AT3G47640.3">
    <property type="protein sequence ID" value="AT3G47640.3"/>
    <property type="gene ID" value="AT3G47640"/>
</dbReference>
<dbReference type="GeneID" id="823918"/>
<dbReference type="Gramene" id="AT3G47640.1">
    <property type="protein sequence ID" value="AT3G47640.1"/>
    <property type="gene ID" value="AT3G47640"/>
</dbReference>
<dbReference type="Gramene" id="AT3G47640.2">
    <property type="protein sequence ID" value="AT3G47640.2"/>
    <property type="gene ID" value="AT3G47640"/>
</dbReference>
<dbReference type="Gramene" id="AT3G47640.3">
    <property type="protein sequence ID" value="AT3G47640.3"/>
    <property type="gene ID" value="AT3G47640"/>
</dbReference>
<dbReference type="KEGG" id="ath:AT3G47640"/>
<dbReference type="Araport" id="AT3G47640"/>
<dbReference type="TAIR" id="AT3G47640">
    <property type="gene designation" value="PYE"/>
</dbReference>
<dbReference type="eggNOG" id="ENOG502RYQ6">
    <property type="taxonomic scope" value="Eukaryota"/>
</dbReference>
<dbReference type="HOGENOM" id="CLU_053417_2_0_1"/>
<dbReference type="InParanoid" id="Q9SN74"/>
<dbReference type="OMA" id="KELTMPH"/>
<dbReference type="OrthoDB" id="1931098at2759"/>
<dbReference type="PhylomeDB" id="Q9SN74"/>
<dbReference type="PRO" id="PR:Q9SN74"/>
<dbReference type="Proteomes" id="UP000006548">
    <property type="component" value="Chromosome 3"/>
</dbReference>
<dbReference type="ExpressionAtlas" id="Q9SN74">
    <property type="expression patterns" value="baseline and differential"/>
</dbReference>
<dbReference type="GO" id="GO:0005634">
    <property type="term" value="C:nucleus"/>
    <property type="evidence" value="ECO:0000314"/>
    <property type="project" value="UniProtKB"/>
</dbReference>
<dbReference type="GO" id="GO:0003677">
    <property type="term" value="F:DNA binding"/>
    <property type="evidence" value="ECO:0007669"/>
    <property type="project" value="UniProtKB-KW"/>
</dbReference>
<dbReference type="GO" id="GO:0003700">
    <property type="term" value="F:DNA-binding transcription factor activity"/>
    <property type="evidence" value="ECO:0000314"/>
    <property type="project" value="TAIR"/>
</dbReference>
<dbReference type="GO" id="GO:0046983">
    <property type="term" value="F:protein dimerization activity"/>
    <property type="evidence" value="ECO:0007669"/>
    <property type="project" value="InterPro"/>
</dbReference>
<dbReference type="GO" id="GO:0010106">
    <property type="term" value="P:cellular response to iron ion starvation"/>
    <property type="evidence" value="ECO:0000315"/>
    <property type="project" value="TAIR"/>
</dbReference>
<dbReference type="GO" id="GO:0006355">
    <property type="term" value="P:regulation of DNA-templated transcription"/>
    <property type="evidence" value="ECO:0000304"/>
    <property type="project" value="TAIR"/>
</dbReference>
<dbReference type="CDD" id="cd11446">
    <property type="entry name" value="bHLH_AtILR3_like"/>
    <property type="match status" value="1"/>
</dbReference>
<dbReference type="Gene3D" id="4.10.280.10">
    <property type="entry name" value="Helix-loop-helix DNA-binding domain"/>
    <property type="match status" value="1"/>
</dbReference>
<dbReference type="InterPro" id="IPR011598">
    <property type="entry name" value="bHLH_dom"/>
</dbReference>
<dbReference type="InterPro" id="IPR036638">
    <property type="entry name" value="HLH_DNA-bd_sf"/>
</dbReference>
<dbReference type="PANTHER" id="PTHR47075">
    <property type="entry name" value="TRANSCRIPTION FACTOR BHLH47"/>
    <property type="match status" value="1"/>
</dbReference>
<dbReference type="PANTHER" id="PTHR47075:SF9">
    <property type="entry name" value="TRANSCRIPTION FACTOR BHLH47"/>
    <property type="match status" value="1"/>
</dbReference>
<dbReference type="Pfam" id="PF23177">
    <property type="entry name" value="bHLH_IRO3"/>
    <property type="match status" value="1"/>
</dbReference>
<dbReference type="SUPFAM" id="SSF47459">
    <property type="entry name" value="HLH, helix-loop-helix DNA-binding domain"/>
    <property type="match status" value="1"/>
</dbReference>
<dbReference type="PROSITE" id="PS50888">
    <property type="entry name" value="BHLH"/>
    <property type="match status" value="1"/>
</dbReference>
<protein>
    <recommendedName>
        <fullName>Transcription factor bHLH47</fullName>
    </recommendedName>
    <alternativeName>
        <fullName>Basic helix-loop-helix protein 47</fullName>
        <shortName>AtbHLH47</shortName>
        <shortName>bHLH 47</shortName>
    </alternativeName>
    <alternativeName>
        <fullName>Protein POPEYE</fullName>
    </alternativeName>
    <alternativeName>
        <fullName>Transcription factor EN 139</fullName>
    </alternativeName>
    <alternativeName>
        <fullName>bHLH transcription factor bHLH047</fullName>
    </alternativeName>
</protein>
<comment type="subunit">
    <text evidence="5 6">Homodimer (Probable). Forms heterodimer with PYEL proteins bHLH115, bHLH104 and ILR3 (PubMed:25452667).</text>
</comment>
<comment type="interaction">
    <interactant intactId="EBI-4437532">
        <id>Q9SN74</id>
    </interactant>
    <interactant intactId="EBI-4442198">
        <id>Q93Y00</id>
        <label>BHLH7</label>
    </interactant>
    <organismsDiffer>false</organismsDiffer>
    <experiments>3</experiments>
</comment>
<comment type="interaction">
    <interactant intactId="EBI-4437532">
        <id>Q9SN74</id>
    </interactant>
    <interactant intactId="EBI-1998580">
        <id>Q8VZI9</id>
        <label>ENAP1</label>
    </interactant>
    <organismsDiffer>false</organismsDiffer>
    <experiments>3</experiments>
</comment>
<comment type="interaction">
    <interactant intactId="EBI-4437532">
        <id>Q9SN74</id>
    </interactant>
    <interactant intactId="EBI-4424563">
        <id>Q93Z00</id>
        <label>TCP14</label>
    </interactant>
    <organismsDiffer>false</organismsDiffer>
    <experiments>3</experiments>
</comment>
<comment type="interaction">
    <interactant intactId="EBI-4437532">
        <id>Q9SN74</id>
    </interactant>
    <interactant intactId="EBI-4426144">
        <id>Q9C9L2</id>
        <label>TCP15</label>
    </interactant>
    <organismsDiffer>false</organismsDiffer>
    <experiments>3</experiments>
</comment>
<comment type="interaction">
    <interactant intactId="EBI-4437532">
        <id>Q9SN74</id>
    </interactant>
    <interactant intactId="EBI-9838721">
        <id>O64647</id>
        <label>TCP9</label>
    </interactant>
    <organismsDiffer>false</organismsDiffer>
    <experiments>3</experiments>
</comment>
<comment type="subcellular location">
    <subcellularLocation>
        <location evidence="2 5">Nucleus</location>
    </subcellularLocation>
</comment>
<comment type="tissue specificity">
    <text evidence="4">Expressed constitutively in roots, leaves, stems, and flowers.</text>
</comment>
<gene>
    <name type="primary">BHLH47</name>
    <name type="synonym">EN139</name>
    <name type="synonym">PYE</name>
    <name type="ordered locus">At3g47640</name>
    <name type="ORF">F1P2.190</name>
</gene>